<organism>
    <name type="scientific">Halalkalibacterium halodurans (strain ATCC BAA-125 / DSM 18197 / FERM 7344 / JCM 9153 / C-125)</name>
    <name type="common">Bacillus halodurans</name>
    <dbReference type="NCBI Taxonomy" id="272558"/>
    <lineage>
        <taxon>Bacteria</taxon>
        <taxon>Bacillati</taxon>
        <taxon>Bacillota</taxon>
        <taxon>Bacilli</taxon>
        <taxon>Bacillales</taxon>
        <taxon>Bacillaceae</taxon>
        <taxon>Halalkalibacterium (ex Joshi et al. 2022)</taxon>
    </lineage>
</organism>
<accession>Q9Z9X0</accession>
<accession>Q9JPV7</accession>
<reference key="1">
    <citation type="journal article" date="1999" name="Extremophiles">
        <title>Sequencing of three lambda clones from the genome of alkaliphilic Bacillus sp. strain C-125.</title>
        <authorList>
            <person name="Takami H."/>
            <person name="Nakasone K."/>
            <person name="Ogasawara N."/>
            <person name="Hirama C."/>
            <person name="Nakamura Y."/>
            <person name="Masui N."/>
            <person name="Fuji F."/>
            <person name="Takaki Y."/>
            <person name="Inoue A."/>
            <person name="Horikoshi K."/>
        </authorList>
    </citation>
    <scope>NUCLEOTIDE SEQUENCE [GENOMIC DNA]</scope>
    <source>
        <strain>ATCC BAA-125 / DSM 18197 / FERM 7344 / JCM 9153 / C-125</strain>
    </source>
</reference>
<reference key="2">
    <citation type="journal article" date="2000" name="Nucleic Acids Res.">
        <title>Complete genome sequence of the alkaliphilic bacterium Bacillus halodurans and genomic sequence comparison with Bacillus subtilis.</title>
        <authorList>
            <person name="Takami H."/>
            <person name="Nakasone K."/>
            <person name="Takaki Y."/>
            <person name="Maeno G."/>
            <person name="Sasaki R."/>
            <person name="Masui N."/>
            <person name="Fuji F."/>
            <person name="Hirama C."/>
            <person name="Nakamura Y."/>
            <person name="Ogasawara N."/>
            <person name="Kuhara S."/>
            <person name="Horikoshi K."/>
        </authorList>
    </citation>
    <scope>NUCLEOTIDE SEQUENCE [LARGE SCALE GENOMIC DNA]</scope>
    <source>
        <strain>ATCC BAA-125 / DSM 18197 / FERM 7344 / JCM 9153 / C-125</strain>
    </source>
</reference>
<gene>
    <name type="primary">gatB</name>
    <name type="ordered locus">BH0667</name>
</gene>
<dbReference type="EC" id="6.3.5.-"/>
<dbReference type="EMBL" id="AB011836">
    <property type="protein sequence ID" value="BAA75312.1"/>
    <property type="molecule type" value="Genomic_DNA"/>
</dbReference>
<dbReference type="EMBL" id="BA000004">
    <property type="protein sequence ID" value="BAB04386.1"/>
    <property type="molecule type" value="Genomic_DNA"/>
</dbReference>
<dbReference type="PIR" id="T44293">
    <property type="entry name" value="T44293"/>
</dbReference>
<dbReference type="RefSeq" id="WP_010896843.1">
    <property type="nucleotide sequence ID" value="NC_002570.2"/>
</dbReference>
<dbReference type="SMR" id="Q9Z9X0"/>
<dbReference type="STRING" id="272558.gene:10726541"/>
<dbReference type="KEGG" id="bha:BH0667"/>
<dbReference type="eggNOG" id="COG0064">
    <property type="taxonomic scope" value="Bacteria"/>
</dbReference>
<dbReference type="HOGENOM" id="CLU_019240_0_0_9"/>
<dbReference type="OrthoDB" id="9804078at2"/>
<dbReference type="Proteomes" id="UP000001258">
    <property type="component" value="Chromosome"/>
</dbReference>
<dbReference type="GO" id="GO:0050566">
    <property type="term" value="F:asparaginyl-tRNA synthase (glutamine-hydrolyzing) activity"/>
    <property type="evidence" value="ECO:0007669"/>
    <property type="project" value="RHEA"/>
</dbReference>
<dbReference type="GO" id="GO:0005524">
    <property type="term" value="F:ATP binding"/>
    <property type="evidence" value="ECO:0007669"/>
    <property type="project" value="UniProtKB-KW"/>
</dbReference>
<dbReference type="GO" id="GO:0050567">
    <property type="term" value="F:glutaminyl-tRNA synthase (glutamine-hydrolyzing) activity"/>
    <property type="evidence" value="ECO:0007669"/>
    <property type="project" value="UniProtKB-UniRule"/>
</dbReference>
<dbReference type="GO" id="GO:0070681">
    <property type="term" value="P:glutaminyl-tRNAGln biosynthesis via transamidation"/>
    <property type="evidence" value="ECO:0007669"/>
    <property type="project" value="TreeGrafter"/>
</dbReference>
<dbReference type="GO" id="GO:0006412">
    <property type="term" value="P:translation"/>
    <property type="evidence" value="ECO:0007669"/>
    <property type="project" value="UniProtKB-UniRule"/>
</dbReference>
<dbReference type="FunFam" id="1.10.10.410:FF:000001">
    <property type="entry name" value="Aspartyl/glutamyl-tRNA(Asn/Gln) amidotransferase subunit B"/>
    <property type="match status" value="1"/>
</dbReference>
<dbReference type="FunFam" id="1.10.150.380:FF:000001">
    <property type="entry name" value="Aspartyl/glutamyl-tRNA(Asn/Gln) amidotransferase subunit B"/>
    <property type="match status" value="1"/>
</dbReference>
<dbReference type="Gene3D" id="1.10.10.410">
    <property type="match status" value="1"/>
</dbReference>
<dbReference type="Gene3D" id="1.10.150.380">
    <property type="entry name" value="GatB domain, N-terminal subdomain"/>
    <property type="match status" value="1"/>
</dbReference>
<dbReference type="HAMAP" id="MF_00121">
    <property type="entry name" value="GatB"/>
    <property type="match status" value="1"/>
</dbReference>
<dbReference type="InterPro" id="IPR017959">
    <property type="entry name" value="Asn/Gln-tRNA_amidoTrfase_suB/E"/>
</dbReference>
<dbReference type="InterPro" id="IPR006075">
    <property type="entry name" value="Asn/Gln-tRNA_Trfase_suB/E_cat"/>
</dbReference>
<dbReference type="InterPro" id="IPR018027">
    <property type="entry name" value="Asn/Gln_amidotransferase"/>
</dbReference>
<dbReference type="InterPro" id="IPR003789">
    <property type="entry name" value="Asn/Gln_tRNA_amidoTrase-B-like"/>
</dbReference>
<dbReference type="InterPro" id="IPR004413">
    <property type="entry name" value="GatB"/>
</dbReference>
<dbReference type="InterPro" id="IPR042114">
    <property type="entry name" value="GatB_C_1"/>
</dbReference>
<dbReference type="InterPro" id="IPR023168">
    <property type="entry name" value="GatB_Yqey_C_2"/>
</dbReference>
<dbReference type="InterPro" id="IPR017958">
    <property type="entry name" value="Gln-tRNA_amidoTrfase_suB_CS"/>
</dbReference>
<dbReference type="InterPro" id="IPR014746">
    <property type="entry name" value="Gln_synth/guanido_kin_cat_dom"/>
</dbReference>
<dbReference type="NCBIfam" id="TIGR00133">
    <property type="entry name" value="gatB"/>
    <property type="match status" value="1"/>
</dbReference>
<dbReference type="NCBIfam" id="NF004011">
    <property type="entry name" value="PRK05477.1-1"/>
    <property type="match status" value="1"/>
</dbReference>
<dbReference type="NCBIfam" id="NF004012">
    <property type="entry name" value="PRK05477.1-2"/>
    <property type="match status" value="1"/>
</dbReference>
<dbReference type="NCBIfam" id="NF004014">
    <property type="entry name" value="PRK05477.1-4"/>
    <property type="match status" value="1"/>
</dbReference>
<dbReference type="PANTHER" id="PTHR11659">
    <property type="entry name" value="GLUTAMYL-TRNA GLN AMIDOTRANSFERASE SUBUNIT B MITOCHONDRIAL AND PROKARYOTIC PET112-RELATED"/>
    <property type="match status" value="1"/>
</dbReference>
<dbReference type="PANTHER" id="PTHR11659:SF0">
    <property type="entry name" value="GLUTAMYL-TRNA(GLN) AMIDOTRANSFERASE SUBUNIT B, MITOCHONDRIAL"/>
    <property type="match status" value="1"/>
</dbReference>
<dbReference type="Pfam" id="PF02934">
    <property type="entry name" value="GatB_N"/>
    <property type="match status" value="1"/>
</dbReference>
<dbReference type="Pfam" id="PF02637">
    <property type="entry name" value="GatB_Yqey"/>
    <property type="match status" value="1"/>
</dbReference>
<dbReference type="SMART" id="SM00845">
    <property type="entry name" value="GatB_Yqey"/>
    <property type="match status" value="1"/>
</dbReference>
<dbReference type="SUPFAM" id="SSF89095">
    <property type="entry name" value="GatB/YqeY motif"/>
    <property type="match status" value="1"/>
</dbReference>
<dbReference type="SUPFAM" id="SSF55931">
    <property type="entry name" value="Glutamine synthetase/guanido kinase"/>
    <property type="match status" value="1"/>
</dbReference>
<dbReference type="PROSITE" id="PS01234">
    <property type="entry name" value="GATB"/>
    <property type="match status" value="1"/>
</dbReference>
<name>GATB_HALH5</name>
<proteinExistence type="inferred from homology"/>
<protein>
    <recommendedName>
        <fullName>Aspartyl/glutamyl-tRNA(Asn/Gln) amidotransferase subunit B</fullName>
        <shortName>Asp/Glu-ADT subunit B</shortName>
        <ecNumber>6.3.5.-</ecNumber>
    </recommendedName>
</protein>
<evidence type="ECO:0000250" key="1"/>
<evidence type="ECO:0000305" key="2"/>
<keyword id="KW-0067">ATP-binding</keyword>
<keyword id="KW-0436">Ligase</keyword>
<keyword id="KW-0547">Nucleotide-binding</keyword>
<keyword id="KW-0648">Protein biosynthesis</keyword>
<keyword id="KW-1185">Reference proteome</keyword>
<feature type="chain" id="PRO_0000148760" description="Aspartyl/glutamyl-tRNA(Asn/Gln) amidotransferase subunit B">
    <location>
        <begin position="1"/>
        <end position="476"/>
    </location>
</feature>
<sequence>MNFETVIGLEVHVELKTESKIFSASPNHFGAEPNANTSVIDLGYPGVLPVLNKAAVEFAMKAAMALNCEVATDTKFDRKNYFYPDNPKAYQISQFDKPIGENGWIEIEVDGTKKKIGITRLHLEEDAGKLTHSGNGYSLVDFNRQGTPLIEIVSEPDIRTPQEAYAYLEKLKSIIQYTGVSDCKMEEGSLRCDANISLRPVGQEEFGTKTELKNLNSFNFVRKGLEYEEKRQAQVLLSGGEILQETRRYDEAANKTVLMRVKEGSDDYRYFPEPDLVALHIDDEWKARIRSEIPELPDARKKRYVEELGLPAYDAMVLTLTKEMSDFFEETIAKGADPKLASNWLMGEVSGYLNAEQKELDEVALTPDGLAKMIQLIEKGTISSKIAKKVFKDLIEKGGDPEEIVKAKGLVQISDEGELRKYVVEVLDNNQQSIDDFKNGKDRAIGFLVGQIMKATKGKANPPMVNKLLLEEINKR</sequence>
<comment type="function">
    <text evidence="1">Allows the formation of correctly charged Asn-tRNA(Asn) or Gln-tRNA(Gln) through the transamidation of misacylated Asp-tRNA(Asn) or Glu-tRNA(Gln) in organisms which lack either or both of asparaginyl-tRNA or glutaminyl-tRNA synthetases. The reaction takes place in the presence of glutamine and ATP through an activated phospho-Asp-tRNA(Asn) or phospho-Glu-tRNA(Gln) (By similarity).</text>
</comment>
<comment type="catalytic activity">
    <reaction>
        <text>L-glutamyl-tRNA(Gln) + L-glutamine + ATP + H2O = L-glutaminyl-tRNA(Gln) + L-glutamate + ADP + phosphate + H(+)</text>
        <dbReference type="Rhea" id="RHEA:17521"/>
        <dbReference type="Rhea" id="RHEA-COMP:9681"/>
        <dbReference type="Rhea" id="RHEA-COMP:9684"/>
        <dbReference type="ChEBI" id="CHEBI:15377"/>
        <dbReference type="ChEBI" id="CHEBI:15378"/>
        <dbReference type="ChEBI" id="CHEBI:29985"/>
        <dbReference type="ChEBI" id="CHEBI:30616"/>
        <dbReference type="ChEBI" id="CHEBI:43474"/>
        <dbReference type="ChEBI" id="CHEBI:58359"/>
        <dbReference type="ChEBI" id="CHEBI:78520"/>
        <dbReference type="ChEBI" id="CHEBI:78521"/>
        <dbReference type="ChEBI" id="CHEBI:456216"/>
    </reaction>
</comment>
<comment type="catalytic activity">
    <reaction>
        <text>L-aspartyl-tRNA(Asn) + L-glutamine + ATP + H2O = L-asparaginyl-tRNA(Asn) + L-glutamate + ADP + phosphate + 2 H(+)</text>
        <dbReference type="Rhea" id="RHEA:14513"/>
        <dbReference type="Rhea" id="RHEA-COMP:9674"/>
        <dbReference type="Rhea" id="RHEA-COMP:9677"/>
        <dbReference type="ChEBI" id="CHEBI:15377"/>
        <dbReference type="ChEBI" id="CHEBI:15378"/>
        <dbReference type="ChEBI" id="CHEBI:29985"/>
        <dbReference type="ChEBI" id="CHEBI:30616"/>
        <dbReference type="ChEBI" id="CHEBI:43474"/>
        <dbReference type="ChEBI" id="CHEBI:58359"/>
        <dbReference type="ChEBI" id="CHEBI:78515"/>
        <dbReference type="ChEBI" id="CHEBI:78516"/>
        <dbReference type="ChEBI" id="CHEBI:456216"/>
    </reaction>
</comment>
<comment type="subunit">
    <text evidence="1">Heterotrimer of A, B and C subunits.</text>
</comment>
<comment type="similarity">
    <text evidence="2">Belongs to the GatB/GatE family. GatB subfamily.</text>
</comment>